<evidence type="ECO:0000269" key="1">
    <source>
    </source>
</evidence>
<evidence type="ECO:0000269" key="2">
    <source>
    </source>
</evidence>
<evidence type="ECO:0000269" key="3">
    <source>
    </source>
</evidence>
<evidence type="ECO:0000269" key="4">
    <source>
    </source>
</evidence>
<evidence type="ECO:0000269" key="5">
    <source>
    </source>
</evidence>
<evidence type="ECO:0000269" key="6">
    <source>
    </source>
</evidence>
<evidence type="ECO:0000269" key="7">
    <source>
    </source>
</evidence>
<evidence type="ECO:0000303" key="8">
    <source>
    </source>
</evidence>
<evidence type="ECO:0000305" key="9">
    <source>
    </source>
</evidence>
<evidence type="ECO:0007744" key="10">
    <source>
        <dbReference type="PDB" id="8K98"/>
    </source>
</evidence>
<evidence type="ECO:0007744" key="11">
    <source>
        <dbReference type="PDB" id="8K9A"/>
    </source>
</evidence>
<evidence type="ECO:0007744" key="12">
    <source>
        <dbReference type="PDB" id="8W56"/>
    </source>
</evidence>
<evidence type="ECO:0007744" key="13">
    <source>
        <dbReference type="PDB" id="8WFN"/>
    </source>
</evidence>
<evidence type="ECO:0007744" key="14">
    <source>
        <dbReference type="PDB" id="8WKN"/>
    </source>
</evidence>
<evidence type="ECO:0007744" key="15">
    <source>
        <dbReference type="PDB" id="8WKS"/>
    </source>
</evidence>
<evidence type="ECO:0007744" key="16">
    <source>
        <dbReference type="PDB" id="8WKT"/>
    </source>
</evidence>
<evidence type="ECO:0007744" key="17">
    <source>
        <dbReference type="PDB" id="8WKX"/>
    </source>
</evidence>
<evidence type="ECO:0007744" key="18">
    <source>
        <dbReference type="PDB" id="8WYA"/>
    </source>
</evidence>
<evidence type="ECO:0007744" key="19">
    <source>
        <dbReference type="PDB" id="8WYB"/>
    </source>
</evidence>
<evidence type="ECO:0007744" key="20">
    <source>
        <dbReference type="PDB" id="8WYC"/>
    </source>
</evidence>
<evidence type="ECO:0007744" key="21">
    <source>
        <dbReference type="PDB" id="8WYD"/>
    </source>
</evidence>
<evidence type="ECO:0007744" key="22">
    <source>
        <dbReference type="PDB" id="8WYE"/>
    </source>
</evidence>
<evidence type="ECO:0007744" key="23">
    <source>
        <dbReference type="PDB" id="8WYF"/>
    </source>
</evidence>
<evidence type="ECO:0007744" key="24">
    <source>
        <dbReference type="PDB" id="8Y13"/>
    </source>
</evidence>
<evidence type="ECO:0007744" key="25">
    <source>
        <dbReference type="PDB" id="8Y34"/>
    </source>
</evidence>
<evidence type="ECO:0007744" key="26">
    <source>
        <dbReference type="PDB" id="8Y3M"/>
    </source>
</evidence>
<evidence type="ECO:0007744" key="27">
    <source>
        <dbReference type="PDB" id="8Y3W"/>
    </source>
</evidence>
<evidence type="ECO:0007744" key="28">
    <source>
        <dbReference type="PDB" id="8Y3Y"/>
    </source>
</evidence>
<evidence type="ECO:0007744" key="29">
    <source>
        <dbReference type="PDB" id="8YKF"/>
    </source>
</evidence>
<evidence type="ECO:0007744" key="30">
    <source>
        <dbReference type="PDB" id="8YL5"/>
    </source>
</evidence>
<evidence type="ECO:0007744" key="31">
    <source>
        <dbReference type="PDB" id="8YLN"/>
    </source>
</evidence>
<evidence type="ECO:0007744" key="32">
    <source>
        <dbReference type="PDB" id="8YLT"/>
    </source>
</evidence>
<evidence type="ECO:0007744" key="33">
    <source>
        <dbReference type="PDB" id="8Z18"/>
    </source>
</evidence>
<evidence type="ECO:0007744" key="34">
    <source>
        <dbReference type="PDB" id="8ZC9"/>
    </source>
</evidence>
<evidence type="ECO:0007744" key="35">
    <source>
        <dbReference type="PDB" id="8ZTR"/>
    </source>
</evidence>
<reference key="1">
    <citation type="journal article" date="2017" name="Genome Announc.">
        <title>Complete Genome Sequence of Bacillus subtilis Strain 29R7-12, a Piezophilic Bacterium Isolated from Coal-Bearing Sediment 2.4 Kilometers below the Seafloor.</title>
        <authorList>
            <person name="Wei Y."/>
            <person name="Cao J."/>
            <person name="Fang J."/>
            <person name="Kato C."/>
            <person name="Cui W."/>
        </authorList>
    </citation>
    <scope>NUCLEOTIDE SEQUENCE [GENOMIC DNA]</scope>
    <source>
        <strain>29R7-12 / 29R</strain>
    </source>
</reference>
<reference key="2">
    <citation type="journal article" date="2022" name="Nat. Microbiol.">
        <title>Multiple phage resistance systems inhibit infection via SIR2-dependent NAD+ depletion.</title>
        <authorList>
            <person name="Garb J."/>
            <person name="Lopatina A."/>
            <person name="Bernheim A."/>
            <person name="Zaremba M."/>
            <person name="Siksnys V."/>
            <person name="Melamed S."/>
            <person name="Leavitt A."/>
            <person name="Millman A."/>
            <person name="Amitai G."/>
            <person name="Sorek R."/>
        </authorList>
    </citation>
    <scope>FUNCTION</scope>
    <scope>CATALYTIC ACTIVITY</scope>
    <scope>DOMAIN</scope>
    <scope>MUTAGENESIS OF ASN-133 AND HIS-171</scope>
    <scope>INTERACTION WITH PHAGE SPR TAIL TUBE PROTEIN (MICROBIAL INFECTION)</scope>
    <scope>ACTIVITY REGULATION (MICROBIAL INFECTION)</scope>
    <source>
        <strain>29R7-12 / 29R</strain>
    </source>
</reference>
<reference evidence="24 25 26 27 28 34" key="3">
    <citation type="journal article" date="2024" name="Nat. Commun.">
        <title>The structural basis of the activation and inhibition of DSR2 NADase by phage proteins.</title>
        <authorList>
            <person name="Wang R."/>
            <person name="Xu Q."/>
            <person name="Wu Z."/>
            <person name="Li J."/>
            <person name="Guo H."/>
            <person name="Liao T."/>
            <person name="Shi Y."/>
            <person name="Yuan L."/>
            <person name="Gao H."/>
            <person name="Yang R."/>
            <person name="Shi Z."/>
            <person name="Li F."/>
        </authorList>
    </citation>
    <scope>STRUCTURE BY ELECTRON MICROSCOPY (3.11 ANGSTROMS) OF MUTANT HIS-171</scope>
    <scope>STRUCTURE BY ELECTRON MICROSCOPY (3.14 ANGSTROMS) IN COMPLEX WITH PHAGE SPR TAIL TUBE PROTEIN AND NAD</scope>
    <scope>STRUCTURE BY ELECTRON MICROSCOPY (3.25 ANGSTROMS) IN COMPLEX WITH PHAGE SPBETA DSAD1</scope>
    <scope>FUNCTION</scope>
    <scope>SUBUNIT</scope>
    <scope>CATALYTIC ACTIVITY</scope>
    <scope>ACTIVITY REGULATION</scope>
    <scope>MUTAGENESIS OF TYR-260</scope>
    <scope>NAD-BINDING</scope>
    <scope>INTERACTION WITH PHAGE SPR TAIL TUBE (MICROBIAL INFECTION)</scope>
    <scope>INTERACTION WITH PHAGE SPBETA DSAD1 (MICROBIAL INFECTION)</scope>
    <scope>ACTIVE SITE</scope>
    <scope>MUTAGENESIS OF TYR-134; ASP-135 AND HIS-171</scope>
    <source>
        <strain>29R7-12 / 29R</strain>
    </source>
</reference>
<reference evidence="18 19 20 21 22 23" key="4">
    <citation type="journal article" date="2024" name="Nat. Commun.">
        <title>Structural basis for phage-mediated activation and repression of bacterial DSR2 anti-phage defense system.</title>
        <authorList>
            <person name="Zhang J.T."/>
            <person name="Liu X.Y."/>
            <person name="Li Z."/>
            <person name="Wei X.Y."/>
            <person name="Song X.Y."/>
            <person name="Cui N."/>
            <person name="Zhong J."/>
            <person name="Li H."/>
            <person name="Jia N."/>
        </authorList>
    </citation>
    <scope>STRUCTURE BY ELECTRON MICROSCOPY (3.37 ANGSTROMS) IN COMPLEX WITH PHAGE SPR TAIL TUBE PROTEIN AND NAD</scope>
    <scope>STRUCTURE BY ELECTRON MICROSCOPY (3.62 ANGSTROMS) IN COMPLEX WITH PHAGE SPR TAIL TUBE PROTEIN</scope>
    <scope>STRUCTURE BY ELECTRON MICROSCOPY (2.56 ANGSTROMS) IN COMPLEX WITH PHAGE SPBETA DSAD1</scope>
    <scope>STRUCTURE BY ELECTRON MICROSCOPY (2.85 ANGSTROMS) IN COMPLEX WITH PHAGE SPBETA DSAD1 AND NAD</scope>
    <scope>INTERACTION WITH PHAGE SPBETA DSAD1 (MICROBIAL INFECTION)</scope>
    <scope>DOMAIN</scope>
    <scope>SUBUNIT</scope>
    <scope>MUTAGENESIS OF TRP-59; TYR-71; ASN-133; ASP-135; ASP-188 AND TYR-282</scope>
    <scope>INTERACTION WITH PHAGE SPR TAIL TUBE (MICROBIAL INFECTION)</scope>
    <scope>ACTIVITY REGULATION (MICROBIAL INFECTION)</scope>
    <scope>CATALYTIC ACTIVITY</scope>
    <scope>FUNCTION</scope>
    <source>
        <strain>29R7-12 / 29R</strain>
    </source>
</reference>
<reference evidence="15 16 17" key="5">
    <citation type="journal article" date="2024" name="Nat. Commun.">
        <title>Molecular basis of bacterial DSR2 anti-phage defense and viral immune evasion.</title>
        <authorList>
            <person name="Huang J."/>
            <person name="Zhu K."/>
            <person name="Gao Y."/>
            <person name="Ye F."/>
            <person name="Li Z."/>
            <person name="Ge Y."/>
            <person name="Liu S."/>
            <person name="Yang J."/>
            <person name="Gao A."/>
        </authorList>
    </citation>
    <scope>STRUCTURE BY ELECTRON MICROSCOPY (4.15 ANGSTROMS)</scope>
    <scope>STRUCTURE BY ELECTRON MICROSCOPY (3.58 ANGSTROMS) OF 2-1005 IN COMPLEX WITH PHAGE SPR TAIL TUBE PROTEIN</scope>
    <scope>STRUCTURE BY ELECTRON MICROSCOPY (3.86 ANGSTROMS) IN COMPLEX WITH PHAGE SPBETA DSAD1</scope>
    <scope>MUTAGENESIS OF 259-ILE-TYR-260</scope>
    <scope>INTERACTION WITH PHAGE SPR TAIL TUBE (MICROBIAL INFECTION)</scope>
    <scope>ACTIVITY REGULATION (MICROBIAL INFECTION)</scope>
    <scope>CATALYTIC ACTIVITY</scope>
    <scope>INTERACTION WITH PHAGE SPBETA DSAD1 (MICROBIAL INFECTION)</scope>
    <scope>FUNCTION</scope>
    <source>
        <strain>29R7-12 / 29R</strain>
    </source>
</reference>
<reference evidence="10 11 12 13 14" key="6">
    <citation type="journal article" date="2024" name="Nat. Commun.">
        <title>Insights into the modulation of bacterial NADase activity by phage proteins.</title>
        <authorList>
            <person name="Yin H."/>
            <person name="Li X."/>
            <person name="Wang X."/>
            <person name="Zhang C."/>
            <person name="Gao J."/>
            <person name="Yu G."/>
            <person name="He Q."/>
            <person name="Yang J."/>
            <person name="Liu X."/>
            <person name="Wei Y."/>
            <person name="Li Z."/>
            <person name="Zhang H."/>
        </authorList>
    </citation>
    <scope>STRUCTURE BY ELECTRON MICROSCOPY (3.40 ANGSTROMS)</scope>
    <scope>STRUCTURE BY ELECTRON MICROSCOPY (2.90 ANGSTROMS) IN COMPLEX WITH PHAGE SPR TAIL TUBE PROTEIN</scope>
    <scope>STRUCTURE BY ELECTRON MICROSCOPY (3.40 ANGSTROMS) IN COMPLEX WITH PHAGE SPBETA DSAD1</scope>
    <scope>SUBUNIT</scope>
    <scope>DOMAIN</scope>
    <scope>INTERACTION WITH PHAGE SPR TAIL TUBE (MICROBIAL INFECTION)</scope>
    <scope>ACTIVITY REGULATION (MICROBIAL INFECTION)</scope>
    <scope>CATALYTIC ACTIVITY</scope>
    <scope>INTERACTION WITH PHAGE SPBETA DSAD1 (MICROBIAL INFECTION)</scope>
    <scope>FUNCTION</scope>
</reference>
<reference evidence="29 30 31 32 33 35" key="7">
    <citation type="journal article" date="2024" name="Int. J. Biol. Macromol.">
        <title>Structural insights into autoinhibition and activation of defense-associated sirtuin protein.</title>
        <authorList>
            <person name="Yang X."/>
            <person name="Wang Y."/>
            <person name="Zheng J."/>
        </authorList>
    </citation>
    <scope>STRUCTURE BY ELECTRON MICROSCOPY (3.53 ANGSTROMS) IN COMPLEX WITH PHAGE SPR TAIL TUBE PROTEIN</scope>
    <scope>STRUCTURE BY ELECTRON MICROSCOPY (3.09 ANGSTROMS) IN COMPLEX WITH NAD</scope>
    <scope>STRUCTURE BY ELECTRON MICROSCOPY (3.26 ANGSTROMS) IN COMPLEX WITH PHAGE SPR TAIL TUBE PROTEIN N-TERMINUS DOMAIN</scope>
    <scope>STRUCTURE BY ELECTRON MICROSCOPY (3.35 ANGSTROMS) IN COMPLEX WITH PHAGE SPBETA DSAD1</scope>
    <scope>FUNCTION</scope>
    <scope>ACTIVITY REGULATION</scope>
    <scope>CATALYTIC ACTIVITY</scope>
    <scope>SUBUNIT</scope>
    <scope>INTERACTION WITH PHAGE SPR TAIL TUBE (MICROBIAL INFECTION)</scope>
    <scope>INTERACTION WITH PHAGE SPBETA DSAD1 (MICROBIAL INFECTION)</scope>
    <scope>ACTIVE SITE</scope>
    <source>
        <strain>29R7-12 / 29R</strain>
    </source>
</reference>
<keyword id="KW-0002">3D-structure</keyword>
<keyword id="KW-0051">Antiviral defense</keyword>
<keyword id="KW-0945">Host-virus interaction</keyword>
<keyword id="KW-0378">Hydrolase</keyword>
<comment type="function">
    <text evidence="2 3 4 5 6 7">Anti-phage defense protein that is activated through the binding to the phage tail tube protein monomer and which hydrolyzes NAD+ upon activation (NADase activity) (PubMed:36192536, PubMed:38538592, PubMed:38555355, PubMed:38729958, PubMed:39039073, PubMed:39059542). The resulting depletion of NAD(+) leads to an abortive infection (PubMed:36192536).</text>
</comment>
<comment type="catalytic activity">
    <reaction evidence="2 3 4 5 6 7">
        <text>NAD(+) + H2O = ADP-D-ribose + nicotinamide + H(+)</text>
        <dbReference type="Rhea" id="RHEA:16301"/>
        <dbReference type="ChEBI" id="CHEBI:15377"/>
        <dbReference type="ChEBI" id="CHEBI:15378"/>
        <dbReference type="ChEBI" id="CHEBI:17154"/>
        <dbReference type="ChEBI" id="CHEBI:57540"/>
        <dbReference type="ChEBI" id="CHEBI:57967"/>
        <dbReference type="EC" id="3.2.2.5"/>
    </reaction>
    <physiologicalReaction direction="left-to-right" evidence="2 3 4 5 6 7">
        <dbReference type="Rhea" id="RHEA:16302"/>
    </physiologicalReaction>
</comment>
<comment type="activity regulation">
    <text evidence="2 3 4 5 6 7">(Microbial infection) NADase activity is activated through the binding of SPR phage tail tube monomer protein (PubMed:36192536, PubMed:38538592, PubMed:38555355, PubMed:38729958, PubMed:39039073). NADase activity is inhibited through the binding to the phage SPbeta DSR anti-defense 1 (DSAD1) (PubMed:36192536, PubMed:38538592, PubMed:38555355, PubMed:38729958, PubMed:39039073, PubMed:39059542).</text>
</comment>
<comment type="subunit">
    <text evidence="4 5 6 7">Homotetramer (dimer of dimers) (PubMed:38555355, PubMed:39039073, PubMed:39059542). Homodimer (PubMed:39059542). The SIR2 domains are arranged in a central core, adopting a head-to-head arrangement, while the CTDs are positioned at the periphery of the complex (PubMed:38555355). Tetramerization is necessary for the activation of NADase activity (PubMed:38555355). The NADase enzymatic activity of this homotetrameric form is autoinhibited (PubMed:38555355, PubMed:38729958, PubMed:39059542). The activated form of DSR2 (after binding to the phage tube protein) exists as tetramers and dimers, with the tetramers exhibiting more NADase activity (PubMed:39059542). Each tetramer binds 4 NAD(+) molecules (PubMed:39039073).</text>
</comment>
<comment type="subunit">
    <text evidence="2 4 5 6 7">(Microbial infection) Interacts (via C-terminus) with phage SPR tail tube monomer protein (via N-terminus) in a 4:4 DSR2-Tube assembly; this interaction induces a conformation change of the tube protein and activates the NADase activity of DSR2.</text>
</comment>
<comment type="subunit">
    <text evidence="4 5 7">(Microbial infection) Interacts (via C-terminus) with phage SPbeta DSAD1 in a 4:2 ratio; this interaction prevents activation of the NADase defense activity of DSR2.</text>
</comment>
<comment type="domain">
    <text evidence="2 3 4">The N-terminus SIR2 domain serves as an NADase effector responsible for NAD+ hydrolysis and is necessary for tetramerization (PubMed:36192536, PubMed:38538592, PubMed:38555355). The C-termius domain (CTD) functions as a sensor for detecting invading phages (PubMed:38538592, PubMed:38555355). The middle domain (MID) connects the SIR2 effector and the CTD sensor (PubMed:38555355).</text>
</comment>
<comment type="miscellaneous">
    <text evidence="1">Bacillus subtilis 29R7-12 has been isolated from the deep subsurface about 2.4 km below the ocean floor.</text>
</comment>
<proteinExistence type="evidence at protein level"/>
<name>DSR2_BACIU</name>
<sequence length="1005" mass="118488">MVKVDLESKRYGEKLKEVFLMLDNNVVECIKEITESSRNGKLVFFVGAGVSTLSDYPQWWRLVDKYHEELYGSPKKGNYSSDEYLRIPQIFYNVKGEMAFDGILKDFFQVDKPTNPIHDKILAMNPAHVITTNYDNLIDTACWKRGKYFSVISAEEDVANATSSRYLLKVHGDFRKGFKGENVVLKEDDYLNYDQNYPLISNLMKTIIATHTIVFIGYGLGDYNINMLLNWVRKLQKDSFHKPFFIRTDPSPIENETLIYYENKGLRIIDAASLIDSNEYDYLERYSAVMDLLIESQENKFITKDDEVIDYIYGKISPLFALQYIRKIDLKHVFEYDYHFEVNGTVVRHKNKGFGYMERFFELKESCDERSKLSKKQYERFNALFNFFEKNGVICMAKDAGTLNTSIEINSLAYHGKYDVMKKFIEEQSVSIEDDYKKAFFLACLGRWEESYDLYSNIILNSIDESNGCVYYLSQINRYRIYQSITQAVTQFNGLGLLTFGRHYKPFTDEFLARIEREMTNFNIDDLFNGMPFEFQKKYKILEFLSDNQFLYDDTVKLFELTNKVRSEMSEGSYSFGMSSDIVVLLRLYDNLRFLYENCLWSVSFHEFHQYIRNSMSLLIEKAEYERTRDIDELGFSFFGKKSGFFMEYYDFVNISRHFKIDDIKNLERSCSIDKIRFGEQEKIEEYLVGIAEEITKQFSANGMNVVFYTQFISEAKAALYFAKYVKLSEEGLGKIVKALLFYFPERDLDIGKRYVWLERLTKCNELPKSIISIIDDFLVLQAEKHIDQNYSEVSSNGLYSRDYGALIKHFEKNFISKRLSEITLCLTQDKQKQIDFLFKLLPLLSTNAKSHLLSFKSVENINDLMNGIRIGLIDEFTPEHEELIIEYLETRKVNYIVEKEKGIQTFSSNDYMSTFGIWYFLEEINNSKMEEFIGMDDQYDFFVDPENFDYKKFIPSWLKNYNDKLLGKIAGNKHMKHHVIEVLKERVKNSNDKRYLEILMNYFI</sequence>
<gene>
    <name type="ORF">BKP58_08510</name>
</gene>
<feature type="chain" id="PRO_0000461782" description="Defense-associated sirtuin 2">
    <location>
        <begin position="1"/>
        <end position="1005"/>
    </location>
</feature>
<feature type="region of interest" description="SIR2" evidence="4 7">
    <location>
        <begin position="1"/>
        <end position="295"/>
    </location>
</feature>
<feature type="region of interest" description="Inter-dimer interaction" evidence="3">
    <location>
        <begin position="56"/>
        <end position="111"/>
    </location>
</feature>
<feature type="region of interest" description="MID" evidence="3">
    <location>
        <begin position="296"/>
        <end position="548"/>
    </location>
</feature>
<feature type="region of interest" description="CTD" evidence="4">
    <location>
        <begin position="549"/>
        <end position="1005"/>
    </location>
</feature>
<feature type="active site" evidence="6 9">
    <location>
        <position position="134"/>
    </location>
</feature>
<feature type="active site" evidence="6 9">
    <location>
        <position position="135"/>
    </location>
</feature>
<feature type="active site" evidence="6 9">
    <location>
        <position position="171"/>
    </location>
</feature>
<feature type="site" description="Interaction with the phage SPR tail tube monomeric protein" evidence="5">
    <location>
        <position position="31"/>
    </location>
</feature>
<feature type="site" description="Interaction with the phage SPR tail tube monomeric protein" evidence="5">
    <location>
        <position position="32"/>
    </location>
</feature>
<feature type="site" description="Interaction with the phage SPR tail tube monomeric protein" evidence="5">
    <location>
        <position position="50"/>
    </location>
</feature>
<feature type="site" description="Interaction with the phage SPR tail tube monomeric protein" evidence="5">
    <location>
        <position position="51"/>
    </location>
</feature>
<feature type="site" description="Interaction with the phage SPR tail tube monomeric protein" evidence="5">
    <location>
        <position position="52"/>
    </location>
</feature>
<feature type="site" description="Interaction with the phage SPR tail tube monomeric protein" evidence="5">
    <location>
        <position position="204"/>
    </location>
</feature>
<feature type="site" description="Interaction with the phage SPR tail tube monomeric protein" evidence="5">
    <location>
        <position position="206"/>
    </location>
</feature>
<feature type="site" description="Interaction with the phage SPR tail tube monomeric protein" evidence="5">
    <location>
        <position position="495"/>
    </location>
</feature>
<feature type="site" description="Interaction with the phage SPR tail tube monomeric protein" evidence="5">
    <location>
        <position position="497"/>
    </location>
</feature>
<feature type="site" description="Interaction with the phage SPR tail tube monomeric protein" evidence="5">
    <location>
        <position position="498"/>
    </location>
</feature>
<feature type="site" description="Interaction with phage SPR tail tube monomeric protein" evidence="5">
    <location>
        <position position="574"/>
    </location>
</feature>
<feature type="site" description="Interaction with phage SPR tail tube monomeric protein" evidence="5">
    <location>
        <position position="576"/>
    </location>
</feature>
<feature type="site" description="Interaction with phage SPbeta DSAD1" evidence="6">
    <location>
        <position position="918"/>
    </location>
</feature>
<feature type="site" description="Interaction with phage SPR tail tube monomeric protein" evidence="5">
    <location>
        <position position="918"/>
    </location>
</feature>
<feature type="site" description="Interaction with phage SPbeta DSAD1" evidence="6">
    <location>
        <position position="919"/>
    </location>
</feature>
<feature type="site" description="Interaction with phage SPR tail tube monomeric protein" evidence="5">
    <location>
        <position position="919"/>
    </location>
</feature>
<feature type="site" description="Interaction with phage SPbeta DSAD1" evidence="6">
    <location>
        <position position="922"/>
    </location>
</feature>
<feature type="site" description="Interaction with phage SPR tail tube monomeric protein" evidence="5">
    <location>
        <position position="922"/>
    </location>
</feature>
<feature type="site" description="Interaction with phage SPR tail tube monomeric protein" evidence="5">
    <location>
        <position position="962"/>
    </location>
</feature>
<feature type="site" description="Interaction with phage SPbeta DSAD1" evidence="6">
    <location>
        <position position="966"/>
    </location>
</feature>
<feature type="site" description="Interaction with phage SPR tail tube monomeric protein" evidence="5">
    <location>
        <position position="966"/>
    </location>
</feature>
<feature type="mutagenesis site" description="Drastic loss of NADase activity." evidence="4">
    <original>W</original>
    <variation>A</variation>
    <location>
        <position position="59"/>
    </location>
</feature>
<feature type="mutagenesis site" description="Drastic loss of tetramerization and NADase activity; when associated with A-188." evidence="4">
    <original>Y</original>
    <variation>A</variation>
    <location>
        <position position="71"/>
    </location>
</feature>
<feature type="mutagenesis site" description="Drastic loss of NADase activity." evidence="4">
    <original>N</original>
    <variation>A</variation>
    <location>
        <position position="133"/>
    </location>
</feature>
<feature type="mutagenesis site" description="Decreases the NADase activity in presence of the phage tail tube protein." evidence="6">
    <original>Y</original>
    <variation>A</variation>
    <location>
        <position position="134"/>
    </location>
</feature>
<feature type="mutagenesis site" description="Decreases the NADase activity in presence of the phage tail tube protein." evidence="4 6">
    <original>D</original>
    <variation>A</variation>
    <location>
        <position position="135"/>
    </location>
</feature>
<feature type="mutagenesis site" description="Decreases the NADase activity in presence of the phage tail tube protein." evidence="6">
    <original>H</original>
    <variation>A</variation>
    <location>
        <position position="171"/>
    </location>
</feature>
<feature type="mutagenesis site" description="Drastic loss of tetramerization and NADase activity; when associated with A-71." evidence="4">
    <original>D</original>
    <variation>A</variation>
    <location>
        <position position="188"/>
    </location>
</feature>
<feature type="mutagenesis site" description="Loss of tetramerization, only dimers are formed." evidence="5">
    <original>IY</original>
    <variation>AA</variation>
    <location>
        <begin position="259"/>
        <end position="260"/>
    </location>
</feature>
<feature type="mutagenesis site" description="Loss of tetramerization. No effect on NADase activity." evidence="6">
    <original>Y</original>
    <variation>E</variation>
    <location>
        <position position="260"/>
    </location>
</feature>
<feature type="mutagenesis site" description="50% loss of NADase activity." evidence="4">
    <original>Y</original>
    <variation>A</variation>
    <location>
        <position position="282"/>
    </location>
</feature>
<accession>P0DXN8</accession>
<dbReference type="EC" id="3.2.2.5" evidence="2 3 4 5 6 7"/>
<dbReference type="EMBL" id="CP017763">
    <property type="protein sequence ID" value="API95927.1"/>
    <property type="molecule type" value="Genomic_DNA"/>
</dbReference>
<dbReference type="RefSeq" id="WP_029317421.1">
    <property type="nucleotide sequence ID" value="NZ_AP024627.1"/>
</dbReference>
<dbReference type="PDB" id="8K98">
    <property type="method" value="EM"/>
    <property type="resolution" value="2.90 A"/>
    <property type="chains" value="B/C=1-1005"/>
</dbReference>
<dbReference type="PDB" id="8K9A">
    <property type="method" value="EM"/>
    <property type="resolution" value="3.90 A"/>
    <property type="chains" value="A/B/C/D=1-1005"/>
</dbReference>
<dbReference type="PDB" id="8W56">
    <property type="method" value="EM"/>
    <property type="resolution" value="3.59 A"/>
    <property type="chains" value="A/B/C/D=1-1005"/>
</dbReference>
<dbReference type="PDB" id="8WFN">
    <property type="method" value="EM"/>
    <property type="resolution" value="4.48 A"/>
    <property type="chains" value="A/B/E/G=1-1005"/>
</dbReference>
<dbReference type="PDB" id="8WKN">
    <property type="method" value="EM"/>
    <property type="resolution" value="3.40 A"/>
    <property type="chains" value="A/B/C/D=1-1005"/>
</dbReference>
<dbReference type="PDB" id="8WKS">
    <property type="method" value="EM"/>
    <property type="resolution" value="3.58 A"/>
    <property type="chains" value="A/D/F/H=2-1005"/>
</dbReference>
<dbReference type="PDB" id="8WKT">
    <property type="method" value="EM"/>
    <property type="resolution" value="3.86 A"/>
    <property type="chains" value="A/B/D/E=2-1005"/>
</dbReference>
<dbReference type="PDB" id="8WKX">
    <property type="method" value="EM"/>
    <property type="resolution" value="4.15 A"/>
    <property type="chains" value="A/E=1-1005"/>
</dbReference>
<dbReference type="PDB" id="8WYA">
    <property type="method" value="EM"/>
    <property type="resolution" value="3.37 A"/>
    <property type="chains" value="A/B/D/E=1-1005"/>
</dbReference>
<dbReference type="PDB" id="8WYB">
    <property type="method" value="EM"/>
    <property type="resolution" value="3.37 A"/>
    <property type="chains" value="A/B/C/D=1-1005"/>
</dbReference>
<dbReference type="PDB" id="8WYC">
    <property type="method" value="EM"/>
    <property type="resolution" value="3.00 A"/>
    <property type="chains" value="A/B/C/D=1-1005"/>
</dbReference>
<dbReference type="PDB" id="8WYD">
    <property type="method" value="EM"/>
    <property type="resolution" value="2.56 A"/>
    <property type="chains" value="A/B/C/D=1-1005"/>
</dbReference>
<dbReference type="PDB" id="8WYE">
    <property type="method" value="EM"/>
    <property type="resolution" value="2.49 A"/>
    <property type="chains" value="A/B/D/E=1-1005"/>
</dbReference>
<dbReference type="PDB" id="8WYF">
    <property type="method" value="EM"/>
    <property type="resolution" value="2.85 A"/>
    <property type="chains" value="A/B/C/D=1-1005"/>
</dbReference>
<dbReference type="PDB" id="8Y13">
    <property type="method" value="EM"/>
    <property type="resolution" value="3.18 A"/>
    <property type="chains" value="A/B/C/D=1-1005"/>
</dbReference>
<dbReference type="PDB" id="8Y34">
    <property type="method" value="EM"/>
    <property type="resolution" value="3.11 A"/>
    <property type="chains" value="A/B=1-1005"/>
</dbReference>
<dbReference type="PDB" id="8Y3M">
    <property type="method" value="EM"/>
    <property type="resolution" value="3.25 A"/>
    <property type="chains" value="A/B=1-1005"/>
</dbReference>
<dbReference type="PDB" id="8Y3W">
    <property type="method" value="EM"/>
    <property type="resolution" value="3.45 A"/>
    <property type="chains" value="A/B/D/E=1-1005"/>
</dbReference>
<dbReference type="PDB" id="8Y3Y">
    <property type="method" value="EM"/>
    <property type="resolution" value="3.33 A"/>
    <property type="chains" value="A/B/D/E=1-1005"/>
</dbReference>
<dbReference type="PDB" id="8YKF">
    <property type="method" value="EM"/>
    <property type="resolution" value="3.35 A"/>
    <property type="chains" value="A/B/C/D=1-1005"/>
</dbReference>
<dbReference type="PDB" id="8YL5">
    <property type="method" value="EM"/>
    <property type="resolution" value="3.45 A"/>
    <property type="chains" value="A/B/C/D=1-1005"/>
</dbReference>
<dbReference type="PDB" id="8YLN">
    <property type="method" value="EM"/>
    <property type="resolution" value="3.53 A"/>
    <property type="chains" value="A/B=1-1005"/>
</dbReference>
<dbReference type="PDB" id="8YLT">
    <property type="method" value="EM"/>
    <property type="resolution" value="3.09 A"/>
    <property type="chains" value="A/B/C/D=1-1005"/>
</dbReference>
<dbReference type="PDB" id="8Z18">
    <property type="method" value="EM"/>
    <property type="resolution" value="3.94 A"/>
    <property type="chains" value="A/B/C/D=1-1005"/>
</dbReference>
<dbReference type="PDB" id="8ZC9">
    <property type="method" value="EM"/>
    <property type="resolution" value="3.14 A"/>
    <property type="chains" value="A/B/D/E=1-1005"/>
</dbReference>
<dbReference type="PDB" id="8ZTR">
    <property type="method" value="EM"/>
    <property type="resolution" value="3.26 A"/>
    <property type="chains" value="A/B=1-1005"/>
</dbReference>
<dbReference type="PDBsum" id="8K98"/>
<dbReference type="PDBsum" id="8K9A"/>
<dbReference type="PDBsum" id="8W56"/>
<dbReference type="PDBsum" id="8WFN"/>
<dbReference type="PDBsum" id="8WKN"/>
<dbReference type="PDBsum" id="8WKS"/>
<dbReference type="PDBsum" id="8WKT"/>
<dbReference type="PDBsum" id="8WKX"/>
<dbReference type="PDBsum" id="8WYA"/>
<dbReference type="PDBsum" id="8WYB"/>
<dbReference type="PDBsum" id="8WYC"/>
<dbReference type="PDBsum" id="8WYD"/>
<dbReference type="PDBsum" id="8WYE"/>
<dbReference type="PDBsum" id="8WYF"/>
<dbReference type="PDBsum" id="8Y13"/>
<dbReference type="PDBsum" id="8Y34"/>
<dbReference type="PDBsum" id="8Y3M"/>
<dbReference type="PDBsum" id="8Y3W"/>
<dbReference type="PDBsum" id="8Y3Y"/>
<dbReference type="PDBsum" id="8YKF"/>
<dbReference type="PDBsum" id="8YL5"/>
<dbReference type="PDBsum" id="8YLN"/>
<dbReference type="PDBsum" id="8YLT"/>
<dbReference type="PDBsum" id="8Z18"/>
<dbReference type="PDBsum" id="8ZC9"/>
<dbReference type="PDBsum" id="8ZTR"/>
<dbReference type="EMDB" id="EMD-37919"/>
<dbReference type="EMDB" id="EMD-37920"/>
<dbReference type="EMDB" id="EMD-37921"/>
<dbReference type="EMDB" id="EMD-37924"/>
<dbReference type="EMDB" id="EMD-37925"/>
<dbReference type="EMDB" id="EMD-37926"/>
<dbReference type="SMR" id="P0DXN8"/>
<dbReference type="GO" id="GO:0016787">
    <property type="term" value="F:hydrolase activity"/>
    <property type="evidence" value="ECO:0007669"/>
    <property type="project" value="UniProtKB-KW"/>
</dbReference>
<dbReference type="GO" id="GO:0051607">
    <property type="term" value="P:defense response to virus"/>
    <property type="evidence" value="ECO:0007669"/>
    <property type="project" value="UniProtKB-KW"/>
</dbReference>
<dbReference type="InterPro" id="IPR029035">
    <property type="entry name" value="DHS-like_NAD/FAD-binding_dom"/>
</dbReference>
<dbReference type="Pfam" id="PF13289">
    <property type="entry name" value="SIR2_2"/>
    <property type="match status" value="1"/>
</dbReference>
<dbReference type="SUPFAM" id="SSF52467">
    <property type="entry name" value="DHS-like NAD/FAD-binding domain"/>
    <property type="match status" value="1"/>
</dbReference>
<organism>
    <name type="scientific">Bacillus subtilis</name>
    <dbReference type="NCBI Taxonomy" id="1423"/>
    <lineage>
        <taxon>Bacteria</taxon>
        <taxon>Bacillati</taxon>
        <taxon>Bacillota</taxon>
        <taxon>Bacilli</taxon>
        <taxon>Bacillales</taxon>
        <taxon>Bacillaceae</taxon>
        <taxon>Bacillus</taxon>
    </lineage>
</organism>
<protein>
    <recommendedName>
        <fullName evidence="8">Defense-associated sirtuin 2</fullName>
        <shortName evidence="8">DSR2</shortName>
        <ecNumber evidence="2 3 4 5 6 7">3.2.2.5</ecNumber>
    </recommendedName>
</protein>